<organism>
    <name type="scientific">Dictyostelium discoideum</name>
    <name type="common">Social amoeba</name>
    <dbReference type="NCBI Taxonomy" id="44689"/>
    <lineage>
        <taxon>Eukaryota</taxon>
        <taxon>Amoebozoa</taxon>
        <taxon>Evosea</taxon>
        <taxon>Eumycetozoa</taxon>
        <taxon>Dictyostelia</taxon>
        <taxon>Dictyosteliales</taxon>
        <taxon>Dictyosteliaceae</taxon>
        <taxon>Dictyostelium</taxon>
    </lineage>
</organism>
<name>LRRX1_DICDI</name>
<gene>
    <name type="ORF">DDB_G0290503</name>
</gene>
<evidence type="ECO:0000255" key="1">
    <source>
        <dbReference type="PROSITE-ProRule" id="PRU00145"/>
    </source>
</evidence>
<evidence type="ECO:0000256" key="2">
    <source>
        <dbReference type="SAM" id="MobiDB-lite"/>
    </source>
</evidence>
<keyword id="KW-0433">Leucine-rich repeat</keyword>
<keyword id="KW-1185">Reference proteome</keyword>
<keyword id="KW-0677">Repeat</keyword>
<reference key="1">
    <citation type="journal article" date="2005" name="Nature">
        <title>The genome of the social amoeba Dictyostelium discoideum.</title>
        <authorList>
            <person name="Eichinger L."/>
            <person name="Pachebat J.A."/>
            <person name="Gloeckner G."/>
            <person name="Rajandream M.A."/>
            <person name="Sucgang R."/>
            <person name="Berriman M."/>
            <person name="Song J."/>
            <person name="Olsen R."/>
            <person name="Szafranski K."/>
            <person name="Xu Q."/>
            <person name="Tunggal B."/>
            <person name="Kummerfeld S."/>
            <person name="Madera M."/>
            <person name="Konfortov B.A."/>
            <person name="Rivero F."/>
            <person name="Bankier A.T."/>
            <person name="Lehmann R."/>
            <person name="Hamlin N."/>
            <person name="Davies R."/>
            <person name="Gaudet P."/>
            <person name="Fey P."/>
            <person name="Pilcher K."/>
            <person name="Chen G."/>
            <person name="Saunders D."/>
            <person name="Sodergren E.J."/>
            <person name="Davis P."/>
            <person name="Kerhornou A."/>
            <person name="Nie X."/>
            <person name="Hall N."/>
            <person name="Anjard C."/>
            <person name="Hemphill L."/>
            <person name="Bason N."/>
            <person name="Farbrother P."/>
            <person name="Desany B."/>
            <person name="Just E."/>
            <person name="Morio T."/>
            <person name="Rost R."/>
            <person name="Churcher C.M."/>
            <person name="Cooper J."/>
            <person name="Haydock S."/>
            <person name="van Driessche N."/>
            <person name="Cronin A."/>
            <person name="Goodhead I."/>
            <person name="Muzny D.M."/>
            <person name="Mourier T."/>
            <person name="Pain A."/>
            <person name="Lu M."/>
            <person name="Harper D."/>
            <person name="Lindsay R."/>
            <person name="Hauser H."/>
            <person name="James K.D."/>
            <person name="Quiles M."/>
            <person name="Madan Babu M."/>
            <person name="Saito T."/>
            <person name="Buchrieser C."/>
            <person name="Wardroper A."/>
            <person name="Felder M."/>
            <person name="Thangavelu M."/>
            <person name="Johnson D."/>
            <person name="Knights A."/>
            <person name="Loulseged H."/>
            <person name="Mungall K.L."/>
            <person name="Oliver K."/>
            <person name="Price C."/>
            <person name="Quail M.A."/>
            <person name="Urushihara H."/>
            <person name="Hernandez J."/>
            <person name="Rabbinowitsch E."/>
            <person name="Steffen D."/>
            <person name="Sanders M."/>
            <person name="Ma J."/>
            <person name="Kohara Y."/>
            <person name="Sharp S."/>
            <person name="Simmonds M.N."/>
            <person name="Spiegler S."/>
            <person name="Tivey A."/>
            <person name="Sugano S."/>
            <person name="White B."/>
            <person name="Walker D."/>
            <person name="Woodward J.R."/>
            <person name="Winckler T."/>
            <person name="Tanaka Y."/>
            <person name="Shaulsky G."/>
            <person name="Schleicher M."/>
            <person name="Weinstock G.M."/>
            <person name="Rosenthal A."/>
            <person name="Cox E.C."/>
            <person name="Chisholm R.L."/>
            <person name="Gibbs R.A."/>
            <person name="Loomis W.F."/>
            <person name="Platzer M."/>
            <person name="Kay R.R."/>
            <person name="Williams J.G."/>
            <person name="Dear P.H."/>
            <person name="Noegel A.A."/>
            <person name="Barrell B.G."/>
            <person name="Kuspa A."/>
        </authorList>
    </citation>
    <scope>NUCLEOTIDE SEQUENCE [LARGE SCALE GENOMIC DNA]</scope>
    <source>
        <strain>AX4</strain>
    </source>
</reference>
<sequence length="1492" mass="174723">MSILLEGYLEKQGEKGIYKSYKNRYFSLAKNGFDLHYFESPPPKDVSFSSSTQSSTALSLGYLDIRQVTSIKKVDGNFVFHVEVPGRVYILRAKNDTEINYWIEGIKDAIKYHEINSSQVQVLDGLIKTKDNDIIKLREKIKHLNEKHQESEKRYQEKEKKFEEQRTIEIQETTKKEQEIKSLTLQLSSKDESMKSLEKQVEKLVDIEHRSEIEQTKKDNEILKLTEKIKEIQLIENLNSTNDSKVNQLLEDNIKRLQESLNEIKDENNDLQSLIDTQKQQFEKRINQYQLEIQDKENELNEMNQQSLSQVKSFQQSLQQSQLDLENDKNQFSTKLQLVNNEIQSLKSIVDDKLKEIQLKDNQLTQLNQQHEIDNNKNNQMILELNDNISKISNQLNEKDNKIQELSKQSIDKQKEIENSTSSSDQLQLKLNDISNELLEKLNDINQLSNKLQDKENQILEINNKLNEKENQLISKDNQLNQLIENNESSSDELKLKLNQLSDELQEKDEKLLNNQSVINELQSNLNENQNKINELIENNQSSSDELKLKLNQLSDKLQEKDEKLKSLESSIIERDEKIDQLQDNLNEKQDKINELVENNESSSDELQSKLIQLSDQLQEKDEKLLNNQSIINELQSNLNENQNKINELIENNQSSSDELNSKLIKLSDELKDKNENVRSLETSIIENQDKLDQLIQSNQVTVNELQSKLNEKEININQLIENNQSSLDELQSKLNEKQNEINQLIENNQSSSDELQSKLNEKHQEISELQSKLNELIENNESSSDELQSKLIQLSDELKEKDEKLKSLDSIIIENQEKLVQLTKSNQDSLDELQSKLNEKQNEINELIENNQSSSNELQSKLNEKQNEINLLIENNQSSSDELQSKLNEKHQEINELQSKLNEKQNKINELVENNESSSDELQSKLIQLSDQLQEKENQLKSFESSIIERDEKLNQLQSKLNEKQNEIDQITENNQSSLDELQSNLNEKQNEINQLIENNQSSLDELQSKLNEKLNEINEKDNKINELIQTNESLSKDQQSKFENLEQELEEKNNKILDLNSQIIDVNHQFSEKENELNQLQLKLIEKDQEIENQNNKIIDINNQLNEKEKEININNDNDNNNEENIQLIEELKEKLQDLENELNLEKDTVNEKNDDINELKEEIKLISEKLSEKEQELNEMINDYDESLNEINDQKDLVKSLNERLTNAHLKINEKDNEIHSLSKEGFNEIQSQLNLITNQLSEKDNLLIEKSQIISDLELQLRESYKERSSSSSLHQQQQMISPDLSNSNDELIVEKEEIINELKEKNQQLEQQLQDLCQQFNKNKQENELKCQQLEEENDGWKNEIDTLNQRLKTQSLNTSPDSSELQQQLDIISNQELNIKQLEKELQDKSGKIDNLEYQVEEMNKQYHIDINQKTNESSEKLQSIQLEIDTIREKYFFAIARSLKLQGAQMGWSMSRSIFDMFDEIKSLNINFDEWPIWISNQLEK</sequence>
<proteinExistence type="predicted"/>
<accession>Q54G05</accession>
<dbReference type="EMBL" id="AAFI02000164">
    <property type="protein sequence ID" value="EAL62112.1"/>
    <property type="molecule type" value="Genomic_DNA"/>
</dbReference>
<dbReference type="RefSeq" id="XP_635612.1">
    <property type="nucleotide sequence ID" value="XM_630520.1"/>
</dbReference>
<dbReference type="SMR" id="Q54G05"/>
<dbReference type="FunCoup" id="Q54G05">
    <property type="interactions" value="877"/>
</dbReference>
<dbReference type="STRING" id="44689.Q54G05"/>
<dbReference type="PaxDb" id="44689-DDB0188916"/>
<dbReference type="EnsemblProtists" id="EAL62112">
    <property type="protein sequence ID" value="EAL62112"/>
    <property type="gene ID" value="DDB_G0290503"/>
</dbReference>
<dbReference type="GeneID" id="8627684"/>
<dbReference type="KEGG" id="ddi:DDB_G0290503"/>
<dbReference type="dictyBase" id="DDB_G0290503"/>
<dbReference type="VEuPathDB" id="AmoebaDB:DDB_G0290503"/>
<dbReference type="eggNOG" id="ENOG502RDH9">
    <property type="taxonomic scope" value="Eukaryota"/>
</dbReference>
<dbReference type="HOGENOM" id="CLU_249111_0_0_1"/>
<dbReference type="InParanoid" id="Q54G05"/>
<dbReference type="OMA" id="KQMNEEY"/>
<dbReference type="PhylomeDB" id="Q54G05"/>
<dbReference type="PRO" id="PR:Q54G05"/>
<dbReference type="Proteomes" id="UP000002195">
    <property type="component" value="Chromosome 5"/>
</dbReference>
<dbReference type="Gene3D" id="2.30.29.30">
    <property type="entry name" value="Pleckstrin-homology domain (PH domain)/Phosphotyrosine-binding domain (PTB)"/>
    <property type="match status" value="1"/>
</dbReference>
<dbReference type="InterPro" id="IPR011993">
    <property type="entry name" value="PH-like_dom_sf"/>
</dbReference>
<dbReference type="InterPro" id="IPR001849">
    <property type="entry name" value="PH_domain"/>
</dbReference>
<dbReference type="PANTHER" id="PTHR19327">
    <property type="entry name" value="GOLGIN"/>
    <property type="match status" value="1"/>
</dbReference>
<dbReference type="PANTHER" id="PTHR19327:SF1">
    <property type="entry name" value="LEUCINE-RICH REPEAT-CONTAINING PROTEIN DDB_G0290503-RELATED"/>
    <property type="match status" value="1"/>
</dbReference>
<dbReference type="Pfam" id="PF00169">
    <property type="entry name" value="PH"/>
    <property type="match status" value="1"/>
</dbReference>
<dbReference type="SMART" id="SM00233">
    <property type="entry name" value="PH"/>
    <property type="match status" value="1"/>
</dbReference>
<dbReference type="SUPFAM" id="SSF50729">
    <property type="entry name" value="PH domain-like"/>
    <property type="match status" value="1"/>
</dbReference>
<dbReference type="SUPFAM" id="SSF57997">
    <property type="entry name" value="Tropomyosin"/>
    <property type="match status" value="1"/>
</dbReference>
<dbReference type="PROSITE" id="PS50003">
    <property type="entry name" value="PH_DOMAIN"/>
    <property type="match status" value="1"/>
</dbReference>
<feature type="chain" id="PRO_0000330593" description="Putative leucine-rich repeat-containing protein DDB_G0290503">
    <location>
        <begin position="1"/>
        <end position="1492"/>
    </location>
</feature>
<feature type="domain" description="PH" evidence="1">
    <location>
        <begin position="2"/>
        <end position="111"/>
    </location>
</feature>
<feature type="repeat" description="LRR 1">
    <location>
        <begin position="123"/>
        <end position="144"/>
    </location>
</feature>
<feature type="repeat" description="LRR 2">
    <location>
        <begin position="180"/>
        <end position="204"/>
    </location>
</feature>
<feature type="repeat" description="LRR 3">
    <location>
        <begin position="258"/>
        <end position="284"/>
    </location>
</feature>
<feature type="repeat" description="LRR 4">
    <location>
        <begin position="329"/>
        <end position="351"/>
    </location>
</feature>
<feature type="repeat" description="LRR 5">
    <location>
        <begin position="352"/>
        <end position="375"/>
    </location>
</feature>
<feature type="repeat" description="LRR 6">
    <location>
        <begin position="389"/>
        <end position="413"/>
    </location>
</feature>
<feature type="repeat" description="LRR 7">
    <location>
        <begin position="439"/>
        <end position="462"/>
    </location>
</feature>
<feature type="repeat" description="LRR 8">
    <location>
        <begin position="519"/>
        <end position="543"/>
    </location>
</feature>
<feature type="repeat" description="LRR 9">
    <location>
        <begin position="551"/>
        <end position="575"/>
    </location>
</feature>
<feature type="repeat" description="LRR 10">
    <location>
        <begin position="579"/>
        <end position="603"/>
    </location>
</feature>
<feature type="repeat" description="LRR 11">
    <location>
        <begin position="632"/>
        <end position="656"/>
    </location>
</feature>
<feature type="repeat" description="LRR 12">
    <location>
        <begin position="728"/>
        <end position="752"/>
    </location>
</feature>
<feature type="repeat" description="LRR 13">
    <location>
        <begin position="806"/>
        <end position="830"/>
    </location>
</feature>
<feature type="repeat" description="LRR 14">
    <location>
        <begin position="831"/>
        <end position="855"/>
    </location>
</feature>
<feature type="repeat" description="LRR 15">
    <location>
        <begin position="895"/>
        <end position="919"/>
    </location>
</feature>
<feature type="repeat" description="LRR 16">
    <location>
        <begin position="927"/>
        <end position="951"/>
    </location>
</feature>
<feature type="repeat" description="LRR 17">
    <location>
        <begin position="955"/>
        <end position="979"/>
    </location>
</feature>
<feature type="repeat" description="LRR 18">
    <location>
        <begin position="1013"/>
        <end position="1036"/>
    </location>
</feature>
<feature type="repeat" description="LRR 19">
    <location>
        <begin position="1044"/>
        <end position="1068"/>
    </location>
</feature>
<feature type="repeat" description="LRR 20">
    <location>
        <begin position="1138"/>
        <end position="1164"/>
    </location>
</feature>
<feature type="repeat" description="LRR 21">
    <location>
        <begin position="1210"/>
        <end position="1232"/>
    </location>
</feature>
<feature type="repeat" description="LRR 22">
    <location>
        <begin position="1424"/>
        <end position="1444"/>
    </location>
</feature>
<feature type="repeat" description="LRR 23">
    <location>
        <begin position="1445"/>
        <end position="1468"/>
    </location>
</feature>
<feature type="region of interest" description="Disordered" evidence="2">
    <location>
        <begin position="1272"/>
        <end position="1292"/>
    </location>
</feature>
<feature type="compositionally biased region" description="Low complexity" evidence="2">
    <location>
        <begin position="1274"/>
        <end position="1286"/>
    </location>
</feature>
<protein>
    <recommendedName>
        <fullName>Putative leucine-rich repeat-containing protein DDB_G0290503</fullName>
    </recommendedName>
</protein>